<name>GPBP1_BOVIN</name>
<keyword id="KW-0010">Activator</keyword>
<keyword id="KW-0238">DNA-binding</keyword>
<keyword id="KW-0488">Methylation</keyword>
<keyword id="KW-0539">Nucleus</keyword>
<keyword id="KW-0597">Phosphoprotein</keyword>
<keyword id="KW-1185">Reference proteome</keyword>
<keyword id="KW-0804">Transcription</keyword>
<keyword id="KW-0805">Transcription regulation</keyword>
<proteinExistence type="evidence at transcript level"/>
<accession>Q0P5K1</accession>
<evidence type="ECO:0000250" key="1"/>
<evidence type="ECO:0000250" key="2">
    <source>
        <dbReference type="UniProtKB" id="Q6NXH3"/>
    </source>
</evidence>
<evidence type="ECO:0000250" key="3">
    <source>
        <dbReference type="UniProtKB" id="Q86WP2"/>
    </source>
</evidence>
<evidence type="ECO:0000256" key="4">
    <source>
        <dbReference type="SAM" id="MobiDB-lite"/>
    </source>
</evidence>
<evidence type="ECO:0000305" key="5"/>
<protein>
    <recommendedName>
        <fullName>Vasculin</fullName>
    </recommendedName>
    <alternativeName>
        <fullName>GC-rich promoter-binding protein 1</fullName>
    </alternativeName>
</protein>
<organism>
    <name type="scientific">Bos taurus</name>
    <name type="common">Bovine</name>
    <dbReference type="NCBI Taxonomy" id="9913"/>
    <lineage>
        <taxon>Eukaryota</taxon>
        <taxon>Metazoa</taxon>
        <taxon>Chordata</taxon>
        <taxon>Craniata</taxon>
        <taxon>Vertebrata</taxon>
        <taxon>Euteleostomi</taxon>
        <taxon>Mammalia</taxon>
        <taxon>Eutheria</taxon>
        <taxon>Laurasiatheria</taxon>
        <taxon>Artiodactyla</taxon>
        <taxon>Ruminantia</taxon>
        <taxon>Pecora</taxon>
        <taxon>Bovidae</taxon>
        <taxon>Bovinae</taxon>
        <taxon>Bos</taxon>
    </lineage>
</organism>
<comment type="function">
    <text evidence="2">Functions as a GC-rich promoter-specific transactivating transcription factor.</text>
</comment>
<comment type="subunit">
    <text evidence="1">Interacts with GTF2B, GTF2F2, RNA polymerase II and TBP.</text>
</comment>
<comment type="subcellular location">
    <subcellularLocation>
        <location evidence="2">Nucleus</location>
    </subcellularLocation>
</comment>
<comment type="similarity">
    <text evidence="5">Belongs to the vasculin family.</text>
</comment>
<sequence>MAQHDFAPAWLNFPTPPSSTKSSLNFEKHSENFSWTENRYDVNRRRHNSSDGFDSGIGRPNGGNFGRKEKNGWRTHGRNGTENINHRGGYHGGSSRSRSSIFHSGKSQGLHENNIPDNETGRKDDKRERKQFEAEDFPSLNPEYEREPNQNKSLAAGVWEYPPNPKSRTQRMLVIKKGNTKDLQLSGFPVVGNLQSQPVKNGTGPSVYKGLVPKPAAPPTKPTQWKSQTKENKVGTSFPHESTYGVGNFNAFKSTAKNFSPSTTSVKECNRSNSSSPVDKLNQQPRLTKLTRMRTDKKSEFLKALKRDRVEEEHEDESHVGSEKDDDSFNLHNSNSTHQERDINRNFDENEIPQENGNASVISQQIIRSSAFPQTDVLSSSLEAEHRLLKEMGWQEDSENDETCAPLTEDEMREFQVISEQLQKNGLRKNGILKNGLICDFKFGPWKNSTFKPTIENDDTETSSSDTSDDDDV</sequence>
<gene>
    <name type="primary">GPBP1</name>
</gene>
<feature type="chain" id="PRO_0000324109" description="Vasculin">
    <location>
        <begin position="1"/>
        <end position="473"/>
    </location>
</feature>
<feature type="region of interest" description="Disordered" evidence="4">
    <location>
        <begin position="1"/>
        <end position="26"/>
    </location>
</feature>
<feature type="region of interest" description="Disordered" evidence="4">
    <location>
        <begin position="44"/>
        <end position="163"/>
    </location>
</feature>
<feature type="region of interest" description="Disordered" evidence="4">
    <location>
        <begin position="196"/>
        <end position="240"/>
    </location>
</feature>
<feature type="region of interest" description="Disordered" evidence="4">
    <location>
        <begin position="258"/>
        <end position="286"/>
    </location>
</feature>
<feature type="region of interest" description="Disordered" evidence="4">
    <location>
        <begin position="305"/>
        <end position="342"/>
    </location>
</feature>
<feature type="region of interest" description="Disordered" evidence="4">
    <location>
        <begin position="444"/>
        <end position="473"/>
    </location>
</feature>
<feature type="compositionally biased region" description="Low complexity" evidence="4">
    <location>
        <begin position="93"/>
        <end position="107"/>
    </location>
</feature>
<feature type="compositionally biased region" description="Basic and acidic residues" evidence="4">
    <location>
        <begin position="119"/>
        <end position="133"/>
    </location>
</feature>
<feature type="compositionally biased region" description="Basic and acidic residues" evidence="4">
    <location>
        <begin position="305"/>
        <end position="329"/>
    </location>
</feature>
<feature type="compositionally biased region" description="Acidic residues" evidence="4">
    <location>
        <begin position="456"/>
        <end position="473"/>
    </location>
</feature>
<feature type="modified residue" description="Phosphoserine" evidence="3">
    <location>
        <position position="49"/>
    </location>
</feature>
<feature type="modified residue" description="Omega-N-methylarginine" evidence="3">
    <location>
        <position position="87"/>
    </location>
</feature>
<feature type="modified residue" description="Phosphoserine" evidence="2">
    <location>
        <position position="274"/>
    </location>
</feature>
<feature type="modified residue" description="Phosphoserine" evidence="2">
    <location>
        <position position="276"/>
    </location>
</feature>
<feature type="modified residue" description="Phosphoserine" evidence="3">
    <location>
        <position position="322"/>
    </location>
</feature>
<feature type="modified residue" description="Phosphoserine" evidence="3">
    <location>
        <position position="381"/>
    </location>
</feature>
<reference key="1">
    <citation type="submission" date="2006-08" db="EMBL/GenBank/DDBJ databases">
        <authorList>
            <consortium name="NIH - Mammalian Gene Collection (MGC) project"/>
        </authorList>
    </citation>
    <scope>NUCLEOTIDE SEQUENCE [LARGE SCALE MRNA]</scope>
    <source>
        <strain>Hereford</strain>
        <tissue>Basal ganglia</tissue>
    </source>
</reference>
<dbReference type="EMBL" id="BC119942">
    <property type="protein sequence ID" value="AAI19943.1"/>
    <property type="molecule type" value="mRNA"/>
</dbReference>
<dbReference type="RefSeq" id="NP_001069755.1">
    <property type="nucleotide sequence ID" value="NM_001076287.1"/>
</dbReference>
<dbReference type="RefSeq" id="XP_005221560.1">
    <property type="nucleotide sequence ID" value="XM_005221503.4"/>
</dbReference>
<dbReference type="RefSeq" id="XP_024837152.1">
    <property type="nucleotide sequence ID" value="XM_024981384.2"/>
</dbReference>
<dbReference type="RefSeq" id="XP_059734768.1">
    <property type="nucleotide sequence ID" value="XM_059878785.1"/>
</dbReference>
<dbReference type="SMR" id="Q0P5K1"/>
<dbReference type="FunCoup" id="Q0P5K1">
    <property type="interactions" value="3151"/>
</dbReference>
<dbReference type="STRING" id="9913.ENSBTAP00000073069"/>
<dbReference type="PaxDb" id="9913-ENSBTAP00000016085"/>
<dbReference type="Ensembl" id="ENSBTAT00000016085.6">
    <property type="protein sequence ID" value="ENSBTAP00000016085.5"/>
    <property type="gene ID" value="ENSBTAG00000012124.7"/>
</dbReference>
<dbReference type="GeneID" id="613751"/>
<dbReference type="KEGG" id="bta:613751"/>
<dbReference type="CTD" id="65056"/>
<dbReference type="VEuPathDB" id="HostDB:ENSBTAG00000012124"/>
<dbReference type="VGNC" id="VGNC:29522">
    <property type="gene designation" value="GPBP1"/>
</dbReference>
<dbReference type="eggNOG" id="ENOG502QR5W">
    <property type="taxonomic scope" value="Eukaryota"/>
</dbReference>
<dbReference type="GeneTree" id="ENSGT00420000029753"/>
<dbReference type="HOGENOM" id="CLU_045487_0_0_1"/>
<dbReference type="InParanoid" id="Q0P5K1"/>
<dbReference type="OrthoDB" id="8741226at2759"/>
<dbReference type="TreeFam" id="TF332220"/>
<dbReference type="Proteomes" id="UP000009136">
    <property type="component" value="Chromosome 20"/>
</dbReference>
<dbReference type="Bgee" id="ENSBTAG00000012124">
    <property type="expression patterns" value="Expressed in oocyte and 106 other cell types or tissues"/>
</dbReference>
<dbReference type="GO" id="GO:0005634">
    <property type="term" value="C:nucleus"/>
    <property type="evidence" value="ECO:0000318"/>
    <property type="project" value="GO_Central"/>
</dbReference>
<dbReference type="GO" id="GO:0003677">
    <property type="term" value="F:DNA binding"/>
    <property type="evidence" value="ECO:0007669"/>
    <property type="project" value="UniProtKB-KW"/>
</dbReference>
<dbReference type="GO" id="GO:0003723">
    <property type="term" value="F:RNA binding"/>
    <property type="evidence" value="ECO:0007669"/>
    <property type="project" value="InterPro"/>
</dbReference>
<dbReference type="GO" id="GO:0006351">
    <property type="term" value="P:DNA-templated transcription"/>
    <property type="evidence" value="ECO:0007669"/>
    <property type="project" value="InterPro"/>
</dbReference>
<dbReference type="GO" id="GO:0045893">
    <property type="term" value="P:positive regulation of DNA-templated transcription"/>
    <property type="evidence" value="ECO:0007669"/>
    <property type="project" value="InterPro"/>
</dbReference>
<dbReference type="GO" id="GO:0006355">
    <property type="term" value="P:regulation of DNA-templated transcription"/>
    <property type="evidence" value="ECO:0000318"/>
    <property type="project" value="GO_Central"/>
</dbReference>
<dbReference type="InterPro" id="IPR028128">
    <property type="entry name" value="Vasculin_fam"/>
</dbReference>
<dbReference type="PANTHER" id="PTHR14339">
    <property type="entry name" value="VASCULIN"/>
    <property type="match status" value="1"/>
</dbReference>
<dbReference type="PANTHER" id="PTHR14339:SF11">
    <property type="entry name" value="VASCULIN"/>
    <property type="match status" value="1"/>
</dbReference>
<dbReference type="Pfam" id="PF15337">
    <property type="entry name" value="Vasculin"/>
    <property type="match status" value="1"/>
</dbReference>